<name>FUS_HRSVA</name>
<protein>
    <recommendedName>
        <fullName>Fusion glycoprotein F0</fullName>
    </recommendedName>
    <component>
        <recommendedName>
            <fullName evidence="29">Fusion glycoprotein F2</fullName>
            <shortName>F2</shortName>
        </recommendedName>
    </component>
    <component>
        <recommendedName>
            <fullName evidence="29">p27</fullName>
        </recommendedName>
        <alternativeName>
            <fullName>Intervening segment</fullName>
        </alternativeName>
        <alternativeName>
            <fullName>Pep27</fullName>
        </alternativeName>
        <alternativeName>
            <fullName>Peptide 27</fullName>
        </alternativeName>
    </component>
    <component>
        <recommendedName>
            <fullName evidence="29">Fusion glycoprotein F1</fullName>
            <shortName>F1</shortName>
        </recommendedName>
    </component>
</protein>
<organism>
    <name type="scientific">Human respiratory syncytial virus A (strain A2)</name>
    <dbReference type="NCBI Taxonomy" id="11259"/>
    <lineage>
        <taxon>Viruses</taxon>
        <taxon>Riboviria</taxon>
        <taxon>Orthornavirae</taxon>
        <taxon>Negarnaviricota</taxon>
        <taxon>Haploviricotina</taxon>
        <taxon>Monjiviricetes</taxon>
        <taxon>Mononegavirales</taxon>
        <taxon>Pneumoviridae</taxon>
        <taxon>Orthopneumovirus</taxon>
        <taxon>Orthopneumovirus hominis</taxon>
    </lineage>
</organism>
<keyword id="KW-0002">3D-structure</keyword>
<keyword id="KW-0165">Cleavage on pair of basic residues</keyword>
<keyword id="KW-0175">Coiled coil</keyword>
<keyword id="KW-0903">Direct protein sequencing</keyword>
<keyword id="KW-1015">Disulfide bond</keyword>
<keyword id="KW-1169">Fusion of virus membrane with host cell membrane</keyword>
<keyword id="KW-1168">Fusion of virus membrane with host membrane</keyword>
<keyword id="KW-0325">Glycoprotein</keyword>
<keyword id="KW-1032">Host cell membrane</keyword>
<keyword id="KW-1040">Host Golgi apparatus</keyword>
<keyword id="KW-1043">Host membrane</keyword>
<keyword id="KW-0945">Host-virus interaction</keyword>
<keyword id="KW-0449">Lipoprotein</keyword>
<keyword id="KW-0472">Membrane</keyword>
<keyword id="KW-0564">Palmitate</keyword>
<keyword id="KW-0732">Signal</keyword>
<keyword id="KW-1180">Syncytium formation induced by viral infection</keyword>
<keyword id="KW-0812">Transmembrane</keyword>
<keyword id="KW-1133">Transmembrane helix</keyword>
<keyword id="KW-1161">Viral attachment to host cell</keyword>
<keyword id="KW-1234">Viral attachment to host entry receptor</keyword>
<keyword id="KW-0261">Viral envelope protein</keyword>
<keyword id="KW-1162">Viral penetration into host cytoplasm</keyword>
<keyword id="KW-0946">Virion</keyword>
<keyword id="KW-1160">Virus entry into host cell</keyword>
<dbReference type="EMBL" id="M11486">
    <property type="protein sequence ID" value="AAB59858.1"/>
    <property type="molecule type" value="Genomic_RNA"/>
</dbReference>
<dbReference type="EMBL" id="U50362">
    <property type="protein sequence ID" value="AAB86664.1"/>
    <property type="molecule type" value="Genomic_RNA"/>
</dbReference>
<dbReference type="EMBL" id="U50363">
    <property type="protein sequence ID" value="AAB86676.1"/>
    <property type="molecule type" value="Genomic_RNA"/>
</dbReference>
<dbReference type="EMBL" id="AF035006">
    <property type="protein sequence ID" value="AAC14902.1"/>
    <property type="molecule type" value="Genomic_RNA"/>
</dbReference>
<dbReference type="EMBL" id="U63644">
    <property type="protein sequence ID" value="AAC55970.1"/>
    <property type="molecule type" value="Genomic_RNA"/>
</dbReference>
<dbReference type="PIR" id="A04035">
    <property type="entry name" value="VGNZA2"/>
</dbReference>
<dbReference type="PIR" id="B28929">
    <property type="entry name" value="B28929"/>
</dbReference>
<dbReference type="PDB" id="2MDP">
    <property type="method" value="NMR"/>
    <property type="chains" value="A=1-85"/>
</dbReference>
<dbReference type="PDB" id="3IXT">
    <property type="method" value="X-ray"/>
    <property type="resolution" value="2.75 A"/>
    <property type="chains" value="C/P=254-277"/>
</dbReference>
<dbReference type="PDB" id="3KPE">
    <property type="method" value="X-ray"/>
    <property type="resolution" value="1.47 A"/>
    <property type="chains" value="A=159-209, B=482-520"/>
</dbReference>
<dbReference type="PDB" id="3O41">
    <property type="method" value="X-ray"/>
    <property type="resolution" value="1.95 A"/>
    <property type="chains" value="C/P=423-436"/>
</dbReference>
<dbReference type="PDB" id="3O45">
    <property type="method" value="X-ray"/>
    <property type="resolution" value="2.87 A"/>
    <property type="chains" value="C/P=423-438"/>
</dbReference>
<dbReference type="PDB" id="3RKI">
    <property type="method" value="X-ray"/>
    <property type="resolution" value="3.20 A"/>
    <property type="chains" value="A/B/C=1-524"/>
</dbReference>
<dbReference type="PDB" id="3RRR">
    <property type="method" value="X-ray"/>
    <property type="resolution" value="2.82 A"/>
    <property type="chains" value="A/C/E/G/I/M=26-109, B/D/F/H/L/N=147-513"/>
</dbReference>
<dbReference type="PDB" id="3RRT">
    <property type="method" value="X-ray"/>
    <property type="resolution" value="3.20 A"/>
    <property type="chains" value="A/C/E=26-109, B/D/F=147-513"/>
</dbReference>
<dbReference type="PDB" id="4CCF">
    <property type="method" value="X-ray"/>
    <property type="resolution" value="2.65 A"/>
    <property type="chains" value="A/B/C/D/E/F=1-574"/>
</dbReference>
<dbReference type="PDB" id="4JHW">
    <property type="method" value="X-ray"/>
    <property type="resolution" value="3.60 A"/>
    <property type="chains" value="F=26-513"/>
</dbReference>
<dbReference type="PDB" id="4MMQ">
    <property type="method" value="X-ray"/>
    <property type="resolution" value="3.25 A"/>
    <property type="chains" value="A=26-107, B=137-513"/>
</dbReference>
<dbReference type="PDB" id="4MMR">
    <property type="method" value="X-ray"/>
    <property type="resolution" value="3.10 A"/>
    <property type="chains" value="A=26-107, B=137-513"/>
</dbReference>
<dbReference type="PDB" id="4MMS">
    <property type="method" value="X-ray"/>
    <property type="resolution" value="2.40 A"/>
    <property type="chains" value="A/C/E=26-107, B/D/F=137-513"/>
</dbReference>
<dbReference type="PDB" id="4MMT">
    <property type="method" value="X-ray"/>
    <property type="resolution" value="3.05 A"/>
    <property type="chains" value="A=26-107, B=137-513"/>
</dbReference>
<dbReference type="PDB" id="4MMU">
    <property type="method" value="X-ray"/>
    <property type="resolution" value="3.00 A"/>
    <property type="chains" value="A=26-107, B=137-513"/>
</dbReference>
<dbReference type="PDB" id="4MMV">
    <property type="method" value="X-ray"/>
    <property type="resolution" value="2.81 A"/>
    <property type="chains" value="A=26-107, B=137-513"/>
</dbReference>
<dbReference type="PDB" id="4ZYP">
    <property type="method" value="X-ray"/>
    <property type="resolution" value="5.50 A"/>
    <property type="chains" value="A/B/C=26-513"/>
</dbReference>
<dbReference type="PDB" id="5C69">
    <property type="method" value="X-ray"/>
    <property type="resolution" value="2.30 A"/>
    <property type="chains" value="A=26-513"/>
</dbReference>
<dbReference type="PDB" id="5C6B">
    <property type="method" value="X-ray"/>
    <property type="resolution" value="2.40 A"/>
    <property type="chains" value="F=26-108, F=113-513"/>
</dbReference>
<dbReference type="PDB" id="5EA3">
    <property type="method" value="X-ray"/>
    <property type="resolution" value="2.75 A"/>
    <property type="chains" value="F=1-513"/>
</dbReference>
<dbReference type="PDB" id="5EA4">
    <property type="method" value="X-ray"/>
    <property type="resolution" value="2.30 A"/>
    <property type="chains" value="F=1-513"/>
</dbReference>
<dbReference type="PDB" id="5EA5">
    <property type="method" value="X-ray"/>
    <property type="resolution" value="3.05 A"/>
    <property type="chains" value="F=1-513"/>
</dbReference>
<dbReference type="PDB" id="5EA6">
    <property type="method" value="X-ray"/>
    <property type="resolution" value="2.75 A"/>
    <property type="chains" value="F=1-513"/>
</dbReference>
<dbReference type="PDB" id="5EA7">
    <property type="method" value="X-ray"/>
    <property type="resolution" value="2.85 A"/>
    <property type="chains" value="F=1-513"/>
</dbReference>
<dbReference type="PDB" id="5EA8">
    <property type="method" value="X-ray"/>
    <property type="resolution" value="2.60 A"/>
    <property type="chains" value="F=1-513"/>
</dbReference>
<dbReference type="PDB" id="5J3D">
    <property type="method" value="X-ray"/>
    <property type="resolution" value="4.08 A"/>
    <property type="chains" value="E/G/J=26-98, F/I/K=147-513"/>
</dbReference>
<dbReference type="PDB" id="5K6B">
    <property type="method" value="X-ray"/>
    <property type="resolution" value="2.98 A"/>
    <property type="chains" value="F=26-105, F=145-509"/>
</dbReference>
<dbReference type="PDB" id="5K6C">
    <property type="method" value="X-ray"/>
    <property type="resolution" value="3.58 A"/>
    <property type="chains" value="F=26-103, F=145-509"/>
</dbReference>
<dbReference type="PDB" id="5K6F">
    <property type="method" value="X-ray"/>
    <property type="resolution" value="2.59 A"/>
    <property type="chains" value="F=26-101, F=145-509"/>
</dbReference>
<dbReference type="PDB" id="5K6G">
    <property type="method" value="X-ray"/>
    <property type="resolution" value="2.90 A"/>
    <property type="chains" value="F=26-96, F=145-509"/>
</dbReference>
<dbReference type="PDB" id="5K6H">
    <property type="method" value="X-ray"/>
    <property type="resolution" value="2.65 A"/>
    <property type="chains" value="F=26-103, F=145-509"/>
</dbReference>
<dbReference type="PDB" id="5K6I">
    <property type="method" value="X-ray"/>
    <property type="resolution" value="2.92 A"/>
    <property type="chains" value="F=26-101, F=145-509"/>
</dbReference>
<dbReference type="PDB" id="5KWW">
    <property type="method" value="X-ray"/>
    <property type="resolution" value="2.50 A"/>
    <property type="chains" value="F=1-513"/>
</dbReference>
<dbReference type="PDB" id="5TOJ">
    <property type="method" value="X-ray"/>
    <property type="resolution" value="3.30 A"/>
    <property type="chains" value="A/B/C=1-513"/>
</dbReference>
<dbReference type="PDB" id="5TOK">
    <property type="method" value="X-ray"/>
    <property type="resolution" value="3.80 A"/>
    <property type="chains" value="A/B/C=1-513"/>
</dbReference>
<dbReference type="PDB" id="5TPN">
    <property type="method" value="X-ray"/>
    <property type="resolution" value="3.14 A"/>
    <property type="chains" value="A=27-108, A=113-513"/>
</dbReference>
<dbReference type="PDB" id="5U68">
    <property type="method" value="X-ray"/>
    <property type="resolution" value="3.08 A"/>
    <property type="chains" value="A/B/C=1-513"/>
</dbReference>
<dbReference type="PDB" id="5UDC">
    <property type="method" value="X-ray"/>
    <property type="resolution" value="3.45 A"/>
    <property type="chains" value="A/D/F=1-513"/>
</dbReference>
<dbReference type="PDB" id="5W23">
    <property type="method" value="X-ray"/>
    <property type="resolution" value="3.40 A"/>
    <property type="chains" value="A/B/C=1-513"/>
</dbReference>
<dbReference type="PDB" id="6APB">
    <property type="method" value="X-ray"/>
    <property type="resolution" value="3.00 A"/>
    <property type="chains" value="A/B/C=1-513"/>
</dbReference>
<dbReference type="PDB" id="6APD">
    <property type="method" value="X-ray"/>
    <property type="resolution" value="4.10 A"/>
    <property type="chains" value="A/B/C=1-513"/>
</dbReference>
<dbReference type="PDB" id="6CXC">
    <property type="method" value="EM"/>
    <property type="resolution" value="3.90 A"/>
    <property type="chains" value="A/B/C/D/E/F=26-526"/>
</dbReference>
<dbReference type="PDB" id="6DC3">
    <property type="method" value="X-ray"/>
    <property type="resolution" value="3.50 A"/>
    <property type="chains" value="F=1-513"/>
</dbReference>
<dbReference type="PDB" id="6DC5">
    <property type="method" value="X-ray"/>
    <property type="resolution" value="3.50 A"/>
    <property type="chains" value="A/D/G=1-513"/>
</dbReference>
<dbReference type="PDB" id="6EAD">
    <property type="method" value="X-ray"/>
    <property type="resolution" value="2.80 A"/>
    <property type="chains" value="F=1-513"/>
</dbReference>
<dbReference type="PDB" id="6EAE">
    <property type="method" value="X-ray"/>
    <property type="resolution" value="2.90 A"/>
    <property type="chains" value="F=1-513"/>
</dbReference>
<dbReference type="PDB" id="6EAF">
    <property type="method" value="X-ray"/>
    <property type="resolution" value="3.00 A"/>
    <property type="chains" value="A/B/C=1-513"/>
</dbReference>
<dbReference type="PDB" id="6EAG">
    <property type="method" value="X-ray"/>
    <property type="resolution" value="3.30 A"/>
    <property type="chains" value="F=1-513"/>
</dbReference>
<dbReference type="PDB" id="6EAH">
    <property type="method" value="X-ray"/>
    <property type="resolution" value="3.00 A"/>
    <property type="chains" value="A/B/C=1-513"/>
</dbReference>
<dbReference type="PDB" id="6EAI">
    <property type="method" value="X-ray"/>
    <property type="resolution" value="2.80 A"/>
    <property type="chains" value="A/B/C=1-513"/>
</dbReference>
<dbReference type="PDB" id="6EAJ">
    <property type="method" value="X-ray"/>
    <property type="resolution" value="2.85 A"/>
    <property type="chains" value="F=1-513"/>
</dbReference>
<dbReference type="PDB" id="6EAK">
    <property type="method" value="X-ray"/>
    <property type="resolution" value="2.60 A"/>
    <property type="chains" value="F=1-513"/>
</dbReference>
<dbReference type="PDB" id="6EAL">
    <property type="method" value="X-ray"/>
    <property type="resolution" value="2.75 A"/>
    <property type="chains" value="F=1-513"/>
</dbReference>
<dbReference type="PDB" id="6EAM">
    <property type="method" value="X-ray"/>
    <property type="resolution" value="2.74 A"/>
    <property type="chains" value="F=1-513"/>
</dbReference>
<dbReference type="PDB" id="6EAN">
    <property type="method" value="X-ray"/>
    <property type="resolution" value="2.90 A"/>
    <property type="chains" value="F=1-513"/>
</dbReference>
<dbReference type="PDB" id="6NTX">
    <property type="method" value="X-ray"/>
    <property type="resolution" value="2.20 A"/>
    <property type="chains" value="A/B=159-209"/>
</dbReference>
<dbReference type="PDB" id="6OE4">
    <property type="method" value="X-ray"/>
    <property type="resolution" value="3.30 A"/>
    <property type="chains" value="A/D=1-513"/>
</dbReference>
<dbReference type="PDB" id="6OE5">
    <property type="method" value="X-ray"/>
    <property type="resolution" value="4.10 A"/>
    <property type="chains" value="A=1-513"/>
</dbReference>
<dbReference type="PDB" id="6OJ7">
    <property type="method" value="X-ray"/>
    <property type="resolution" value="1.45 A"/>
    <property type="chains" value="A=159-209"/>
</dbReference>
<dbReference type="PDB" id="6OUS">
    <property type="method" value="X-ray"/>
    <property type="resolution" value="3.40 A"/>
    <property type="chains" value="A/C/E/G/I/K=26-109, B/D/F/H/J/L=137-513"/>
</dbReference>
<dbReference type="PDB" id="6VKC">
    <property type="method" value="X-ray"/>
    <property type="resolution" value="2.60 A"/>
    <property type="chains" value="F=1-513"/>
</dbReference>
<dbReference type="PDB" id="6VKD">
    <property type="method" value="X-ray"/>
    <property type="resolution" value="2.50 A"/>
    <property type="chains" value="F=1-513"/>
</dbReference>
<dbReference type="PDB" id="6VKE">
    <property type="method" value="X-ray"/>
    <property type="resolution" value="2.10 A"/>
    <property type="chains" value="F=1-513"/>
</dbReference>
<dbReference type="PDB" id="6W52">
    <property type="method" value="X-ray"/>
    <property type="resolution" value="3.74 A"/>
    <property type="chains" value="A=26-107"/>
</dbReference>
<dbReference type="PDB" id="7LUE">
    <property type="method" value="EM"/>
    <property type="resolution" value="2.90 A"/>
    <property type="chains" value="A/B/C=26-513"/>
</dbReference>
<dbReference type="PDB" id="7LVW">
    <property type="method" value="X-ray"/>
    <property type="resolution" value="2.10 A"/>
    <property type="chains" value="A/B/C/D/E/F=26-513"/>
</dbReference>
<dbReference type="PDB" id="7MMN">
    <property type="method" value="X-ray"/>
    <property type="resolution" value="3.57 A"/>
    <property type="chains" value="A/C/J=26-97, B/I/K=137-516"/>
</dbReference>
<dbReference type="PDB" id="7MPG">
    <property type="method" value="EM"/>
    <property type="resolution" value="3.40 A"/>
    <property type="chains" value="A/B/C=26-513"/>
</dbReference>
<dbReference type="PDB" id="7TN1">
    <property type="method" value="X-ray"/>
    <property type="resolution" value="3.10 A"/>
    <property type="chains" value="A/B/F=1-518"/>
</dbReference>
<dbReference type="PDB" id="8DG9">
    <property type="method" value="EM"/>
    <property type="resolution" value="2.24 A"/>
    <property type="chains" value="A/B/C=1-516"/>
</dbReference>
<dbReference type="PDB" id="8KG5">
    <property type="method" value="EM"/>
    <property type="resolution" value="3.17 A"/>
    <property type="chains" value="A/B/C=1-513"/>
</dbReference>
<dbReference type="PDB" id="8PHI">
    <property type="method" value="X-ray"/>
    <property type="resolution" value="2.29 A"/>
    <property type="chains" value="F=26-513"/>
</dbReference>
<dbReference type="PDB" id="8ULJ">
    <property type="method" value="X-ray"/>
    <property type="resolution" value="3.00 A"/>
    <property type="chains" value="A=26-104"/>
</dbReference>
<dbReference type="PDB" id="8ULK">
    <property type="method" value="X-ray"/>
    <property type="resolution" value="4.28 A"/>
    <property type="chains" value="A/B/C=26-97"/>
</dbReference>
<dbReference type="PDB" id="8WSQ">
    <property type="method" value="X-ray"/>
    <property type="resolution" value="2.90 A"/>
    <property type="chains" value="F=1-513"/>
</dbReference>
<dbReference type="PDB" id="8WZ3">
    <property type="method" value="EM"/>
    <property type="resolution" value="3.19 A"/>
    <property type="chains" value="A/B/C=26-512"/>
</dbReference>
<dbReference type="PDB" id="8WZ4">
    <property type="method" value="EM"/>
    <property type="resolution" value="3.13 A"/>
    <property type="chains" value="C=26-512"/>
</dbReference>
<dbReference type="PDB" id="9B2X">
    <property type="method" value="EM"/>
    <property type="resolution" value="3.28 A"/>
    <property type="chains" value="A/B/C=1-524"/>
</dbReference>
<dbReference type="PDB" id="9HVW">
    <property type="method" value="EM"/>
    <property type="resolution" value="3.10 A"/>
    <property type="chains" value="A/B/C=26-105, D/E/F=137-515"/>
</dbReference>
<dbReference type="PDBsum" id="2MDP"/>
<dbReference type="PDBsum" id="3IXT"/>
<dbReference type="PDBsum" id="3KPE"/>
<dbReference type="PDBsum" id="3O41"/>
<dbReference type="PDBsum" id="3O45"/>
<dbReference type="PDBsum" id="3RKI"/>
<dbReference type="PDBsum" id="3RRR"/>
<dbReference type="PDBsum" id="3RRT"/>
<dbReference type="PDBsum" id="4CCF"/>
<dbReference type="PDBsum" id="4JHW"/>
<dbReference type="PDBsum" id="4MMQ"/>
<dbReference type="PDBsum" id="4MMR"/>
<dbReference type="PDBsum" id="4MMS"/>
<dbReference type="PDBsum" id="4MMT"/>
<dbReference type="PDBsum" id="4MMU"/>
<dbReference type="PDBsum" id="4MMV"/>
<dbReference type="PDBsum" id="4ZYP"/>
<dbReference type="PDBsum" id="5C69"/>
<dbReference type="PDBsum" id="5C6B"/>
<dbReference type="PDBsum" id="5EA3"/>
<dbReference type="PDBsum" id="5EA4"/>
<dbReference type="PDBsum" id="5EA5"/>
<dbReference type="PDBsum" id="5EA6"/>
<dbReference type="PDBsum" id="5EA7"/>
<dbReference type="PDBsum" id="5EA8"/>
<dbReference type="PDBsum" id="5J3D"/>
<dbReference type="PDBsum" id="5K6B"/>
<dbReference type="PDBsum" id="5K6C"/>
<dbReference type="PDBsum" id="5K6F"/>
<dbReference type="PDBsum" id="5K6G"/>
<dbReference type="PDBsum" id="5K6H"/>
<dbReference type="PDBsum" id="5K6I"/>
<dbReference type="PDBsum" id="5KWW"/>
<dbReference type="PDBsum" id="5TOJ"/>
<dbReference type="PDBsum" id="5TOK"/>
<dbReference type="PDBsum" id="5TPN"/>
<dbReference type="PDBsum" id="5U68"/>
<dbReference type="PDBsum" id="5UDC"/>
<dbReference type="PDBsum" id="5W23"/>
<dbReference type="PDBsum" id="6APB"/>
<dbReference type="PDBsum" id="6APD"/>
<dbReference type="PDBsum" id="6CXC"/>
<dbReference type="PDBsum" id="6DC3"/>
<dbReference type="PDBsum" id="6DC5"/>
<dbReference type="PDBsum" id="6EAD"/>
<dbReference type="PDBsum" id="6EAE"/>
<dbReference type="PDBsum" id="6EAF"/>
<dbReference type="PDBsum" id="6EAG"/>
<dbReference type="PDBsum" id="6EAH"/>
<dbReference type="PDBsum" id="6EAI"/>
<dbReference type="PDBsum" id="6EAJ"/>
<dbReference type="PDBsum" id="6EAK"/>
<dbReference type="PDBsum" id="6EAL"/>
<dbReference type="PDBsum" id="6EAM"/>
<dbReference type="PDBsum" id="6EAN"/>
<dbReference type="PDBsum" id="6NTX"/>
<dbReference type="PDBsum" id="6OE4"/>
<dbReference type="PDBsum" id="6OE5"/>
<dbReference type="PDBsum" id="6OJ7"/>
<dbReference type="PDBsum" id="6OUS"/>
<dbReference type="PDBsum" id="6VKC"/>
<dbReference type="PDBsum" id="6VKD"/>
<dbReference type="PDBsum" id="6VKE"/>
<dbReference type="PDBsum" id="6W52"/>
<dbReference type="PDBsum" id="7LUE"/>
<dbReference type="PDBsum" id="7LVW"/>
<dbReference type="PDBsum" id="7MMN"/>
<dbReference type="PDBsum" id="7MPG"/>
<dbReference type="PDBsum" id="7TN1"/>
<dbReference type="PDBsum" id="8DG9"/>
<dbReference type="PDBsum" id="8KG5"/>
<dbReference type="PDBsum" id="8PHI"/>
<dbReference type="PDBsum" id="8ULJ"/>
<dbReference type="PDBsum" id="8ULK"/>
<dbReference type="PDBsum" id="8WSQ"/>
<dbReference type="PDBsum" id="8WZ3"/>
<dbReference type="PDBsum" id="8WZ4"/>
<dbReference type="PDBsum" id="9B2X"/>
<dbReference type="PDBsum" id="9HVW"/>
<dbReference type="EMDB" id="EMD-2392"/>
<dbReference type="EMDB" id="EMD-2393"/>
<dbReference type="EMDB" id="EMD-27419"/>
<dbReference type="EMDB" id="EMD-37945"/>
<dbReference type="EMDB" id="EMD-37946"/>
<dbReference type="EMDB" id="EMD-52444"/>
<dbReference type="SMR" id="P03420"/>
<dbReference type="DIP" id="DIP-48772N"/>
<dbReference type="ELM" id="P03420"/>
<dbReference type="IntAct" id="P03420">
    <property type="interactions" value="2"/>
</dbReference>
<dbReference type="BindingDB" id="P03420"/>
<dbReference type="ChEMBL" id="CHEMBL3856166"/>
<dbReference type="DrugBank" id="DB06202">
    <property type="generic name" value="Lasofoxifene"/>
</dbReference>
<dbReference type="DrugBank" id="DB16258">
    <property type="generic name" value="Nirsevimab"/>
</dbReference>
<dbReference type="DrugBank" id="DB12165">
    <property type="generic name" value="Presatovir"/>
</dbReference>
<dbReference type="DrugBank" id="DB15672">
    <property type="generic name" value="Rilematovir"/>
</dbReference>
<dbReference type="DrugBank" id="DB15674">
    <property type="generic name" value="Sisunatovir"/>
</dbReference>
<dbReference type="DrugCentral" id="P03420"/>
<dbReference type="TCDB" id="1.G.2.1.3">
    <property type="family name" value="the viral pore-forming membrane fusion protein-2 (vmfp2) family"/>
</dbReference>
<dbReference type="GlyCosmos" id="P03420">
    <property type="glycosylation" value="6 sites, No reported glycans"/>
</dbReference>
<dbReference type="iPTMnet" id="P03420"/>
<dbReference type="ABCD" id="P03420">
    <property type="antibodies" value="28 sequenced antibodies"/>
</dbReference>
<dbReference type="Reactome" id="R-HSA-9820960">
    <property type="pathway name" value="Respiratory syncytial virus (RSV) attachment and entry"/>
</dbReference>
<dbReference type="Reactome" id="R-HSA-9820962">
    <property type="pathway name" value="Assembly and release of respiratory syncytial virus (RSV) virions"/>
</dbReference>
<dbReference type="Reactome" id="R-HSA-9828721">
    <property type="pathway name" value="Translation of respiratory syncytial virus mRNAs"/>
</dbReference>
<dbReference type="Reactome" id="R-HSA-9828806">
    <property type="pathway name" value="Maturation of hRSV A proteins"/>
</dbReference>
<dbReference type="Reactome" id="R-HSA-9833110">
    <property type="pathway name" value="RSV-host interactions"/>
</dbReference>
<dbReference type="EvolutionaryTrace" id="P03420"/>
<dbReference type="Proteomes" id="UP000007678">
    <property type="component" value="Genome"/>
</dbReference>
<dbReference type="Proteomes" id="UP000134464">
    <property type="component" value="Genome"/>
</dbReference>
<dbReference type="Proteomes" id="UP000181145">
    <property type="component" value="Genome"/>
</dbReference>
<dbReference type="Proteomes" id="UP000181262">
    <property type="component" value="Genome"/>
</dbReference>
<dbReference type="Proteomes" id="UP000181559">
    <property type="component" value="Genome"/>
</dbReference>
<dbReference type="GO" id="GO:0044178">
    <property type="term" value="C:host cell Golgi membrane"/>
    <property type="evidence" value="ECO:0007669"/>
    <property type="project" value="UniProtKB-SubCell"/>
</dbReference>
<dbReference type="GO" id="GO:0020002">
    <property type="term" value="C:host cell plasma membrane"/>
    <property type="evidence" value="ECO:0007669"/>
    <property type="project" value="UniProtKB-SubCell"/>
</dbReference>
<dbReference type="GO" id="GO:0005886">
    <property type="term" value="C:plasma membrane"/>
    <property type="evidence" value="ECO:0000304"/>
    <property type="project" value="Reactome"/>
</dbReference>
<dbReference type="GO" id="GO:0019031">
    <property type="term" value="C:viral envelope"/>
    <property type="evidence" value="ECO:0007669"/>
    <property type="project" value="UniProtKB-KW"/>
</dbReference>
<dbReference type="GO" id="GO:0055036">
    <property type="term" value="C:virion membrane"/>
    <property type="evidence" value="ECO:0000304"/>
    <property type="project" value="Reactome"/>
</dbReference>
<dbReference type="GO" id="GO:0042802">
    <property type="term" value="F:identical protein binding"/>
    <property type="evidence" value="ECO:0000353"/>
    <property type="project" value="IntAct"/>
</dbReference>
<dbReference type="GO" id="GO:0098670">
    <property type="term" value="P:entry receptor-mediated virion attachment to host cell"/>
    <property type="evidence" value="ECO:0007669"/>
    <property type="project" value="UniProtKB-KW"/>
</dbReference>
<dbReference type="GO" id="GO:0019064">
    <property type="term" value="P:fusion of virus membrane with host plasma membrane"/>
    <property type="evidence" value="ECO:0007669"/>
    <property type="project" value="UniProtKB-KW"/>
</dbReference>
<dbReference type="GO" id="GO:0046718">
    <property type="term" value="P:symbiont entry into host cell"/>
    <property type="evidence" value="ECO:0007669"/>
    <property type="project" value="UniProtKB-KW"/>
</dbReference>
<dbReference type="GO" id="GO:0060141">
    <property type="term" value="P:symbiont-mediated induction of syncytium formation"/>
    <property type="evidence" value="ECO:0007669"/>
    <property type="project" value="UniProtKB-KW"/>
</dbReference>
<dbReference type="FunFam" id="1.10.287.2480:FF:000001">
    <property type="entry name" value="Fusion glycoprotein F0"/>
    <property type="match status" value="1"/>
</dbReference>
<dbReference type="FunFam" id="1.10.287.2480:FF:000002">
    <property type="entry name" value="Fusion glycoprotein F0"/>
    <property type="match status" value="1"/>
</dbReference>
<dbReference type="Gene3D" id="1.10.287.2480">
    <property type="match status" value="2"/>
</dbReference>
<dbReference type="Gene3D" id="6.10.250.1160">
    <property type="match status" value="1"/>
</dbReference>
<dbReference type="Gene3D" id="6.20.370.50">
    <property type="match status" value="1"/>
</dbReference>
<dbReference type="InterPro" id="IPR000776">
    <property type="entry name" value="Fusion_F0_Paramyxovir"/>
</dbReference>
<dbReference type="Pfam" id="PF00523">
    <property type="entry name" value="Fusion_gly"/>
    <property type="match status" value="1"/>
</dbReference>
<dbReference type="SUPFAM" id="SSF58069">
    <property type="entry name" value="Virus ectodomain"/>
    <property type="match status" value="2"/>
</dbReference>
<organismHost>
    <name type="scientific">Homo sapiens</name>
    <name type="common">Human</name>
    <dbReference type="NCBI Taxonomy" id="9606"/>
</organismHost>
<evidence type="ECO:0000250" key="1">
    <source>
        <dbReference type="UniProtKB" id="P11209"/>
    </source>
</evidence>
<evidence type="ECO:0000255" key="2"/>
<evidence type="ECO:0000269" key="3">
    <source>
    </source>
</evidence>
<evidence type="ECO:0000269" key="4">
    <source>
    </source>
</evidence>
<evidence type="ECO:0000269" key="5">
    <source>
    </source>
</evidence>
<evidence type="ECO:0000269" key="6">
    <source>
    </source>
</evidence>
<evidence type="ECO:0000269" key="7">
    <source>
    </source>
</evidence>
<evidence type="ECO:0000269" key="8">
    <source>
    </source>
</evidence>
<evidence type="ECO:0000269" key="9">
    <source>
    </source>
</evidence>
<evidence type="ECO:0000269" key="10">
    <source>
    </source>
</evidence>
<evidence type="ECO:0000269" key="11">
    <source>
    </source>
</evidence>
<evidence type="ECO:0000269" key="12">
    <source>
    </source>
</evidence>
<evidence type="ECO:0000269" key="13">
    <source>
    </source>
</evidence>
<evidence type="ECO:0000269" key="14">
    <source>
    </source>
</evidence>
<evidence type="ECO:0000269" key="15">
    <source>
    </source>
</evidence>
<evidence type="ECO:0000269" key="16">
    <source>
    </source>
</evidence>
<evidence type="ECO:0000269" key="17">
    <source>
    </source>
</evidence>
<evidence type="ECO:0000269" key="18">
    <source>
    </source>
</evidence>
<evidence type="ECO:0000269" key="19">
    <source>
    </source>
</evidence>
<evidence type="ECO:0000269" key="20">
    <source>
    </source>
</evidence>
<evidence type="ECO:0000269" key="21">
    <source>
    </source>
</evidence>
<evidence type="ECO:0000269" key="22">
    <source>
    </source>
</evidence>
<evidence type="ECO:0000269" key="23">
    <source>
    </source>
</evidence>
<evidence type="ECO:0000269" key="24">
    <source>
    </source>
</evidence>
<evidence type="ECO:0000269" key="25">
    <source>
    </source>
</evidence>
<evidence type="ECO:0000269" key="26">
    <source>
    </source>
</evidence>
<evidence type="ECO:0000269" key="27">
    <source>
    </source>
</evidence>
<evidence type="ECO:0000269" key="28">
    <source>
    </source>
</evidence>
<evidence type="ECO:0000303" key="29">
    <source>
    </source>
</evidence>
<evidence type="ECO:0000305" key="30"/>
<evidence type="ECO:0000305" key="31">
    <source>
    </source>
</evidence>
<evidence type="ECO:0000305" key="32">
    <source>
    </source>
</evidence>
<evidence type="ECO:0000305" key="33">
    <source>
    </source>
</evidence>
<evidence type="ECO:0000305" key="34">
    <source>
    </source>
</evidence>
<evidence type="ECO:0000305" key="35">
    <source>
    </source>
</evidence>
<evidence type="ECO:0000305" key="36">
    <source>
    </source>
</evidence>
<evidence type="ECO:0007744" key="37">
    <source>
        <dbReference type="PDB" id="3RRR"/>
    </source>
</evidence>
<evidence type="ECO:0007744" key="38">
    <source>
        <dbReference type="PDB" id="3RRT"/>
    </source>
</evidence>
<evidence type="ECO:0007744" key="39">
    <source>
        <dbReference type="PDB" id="5C69"/>
    </source>
</evidence>
<evidence type="ECO:0007744" key="40">
    <source>
        <dbReference type="PDB" id="5C6B"/>
    </source>
</evidence>
<evidence type="ECO:0007744" key="41">
    <source>
        <dbReference type="PDB" id="5EA3"/>
    </source>
</evidence>
<evidence type="ECO:0007744" key="42">
    <source>
        <dbReference type="PDB" id="5EA4"/>
    </source>
</evidence>
<evidence type="ECO:0007744" key="43">
    <source>
        <dbReference type="PDB" id="5EA5"/>
    </source>
</evidence>
<evidence type="ECO:0007744" key="44">
    <source>
        <dbReference type="PDB" id="5EA6"/>
    </source>
</evidence>
<evidence type="ECO:0007744" key="45">
    <source>
        <dbReference type="PDB" id="5EA7"/>
    </source>
</evidence>
<evidence type="ECO:0007744" key="46">
    <source>
        <dbReference type="PDB" id="5EA8"/>
    </source>
</evidence>
<evidence type="ECO:0007744" key="47">
    <source>
        <dbReference type="PDB" id="5K6B"/>
    </source>
</evidence>
<evidence type="ECO:0007744" key="48">
    <source>
        <dbReference type="PDB" id="5K6C"/>
    </source>
</evidence>
<evidence type="ECO:0007744" key="49">
    <source>
        <dbReference type="PDB" id="5K6F"/>
    </source>
</evidence>
<evidence type="ECO:0007744" key="50">
    <source>
        <dbReference type="PDB" id="5K6G"/>
    </source>
</evidence>
<evidence type="ECO:0007744" key="51">
    <source>
        <dbReference type="PDB" id="5K6H"/>
    </source>
</evidence>
<evidence type="ECO:0007744" key="52">
    <source>
        <dbReference type="PDB" id="5K6I"/>
    </source>
</evidence>
<evidence type="ECO:0007744" key="53">
    <source>
        <dbReference type="PDB" id="5KWW"/>
    </source>
</evidence>
<evidence type="ECO:0007744" key="54">
    <source>
        <dbReference type="PDB" id="5TOJ"/>
    </source>
</evidence>
<evidence type="ECO:0007744" key="55">
    <source>
        <dbReference type="PDB" id="5TOK"/>
    </source>
</evidence>
<evidence type="ECO:0007744" key="56">
    <source>
        <dbReference type="PDB" id="5U68"/>
    </source>
</evidence>
<evidence type="ECO:0007744" key="57">
    <source>
        <dbReference type="PDB" id="5UDC"/>
    </source>
</evidence>
<evidence type="ECO:0007744" key="58">
    <source>
        <dbReference type="PDB" id="5W23"/>
    </source>
</evidence>
<evidence type="ECO:0007744" key="59">
    <source>
        <dbReference type="PDB" id="6APB"/>
    </source>
</evidence>
<evidence type="ECO:0007744" key="60">
    <source>
        <dbReference type="PDB" id="6APD"/>
    </source>
</evidence>
<evidence type="ECO:0007744" key="61">
    <source>
        <dbReference type="PDB" id="6CXC"/>
    </source>
</evidence>
<evidence type="ECO:0007744" key="62">
    <source>
        <dbReference type="PDB" id="6DC3"/>
    </source>
</evidence>
<evidence type="ECO:0007744" key="63">
    <source>
        <dbReference type="PDB" id="6DC5"/>
    </source>
</evidence>
<evidence type="ECO:0007744" key="64">
    <source>
        <dbReference type="PDB" id="6NTX"/>
    </source>
</evidence>
<evidence type="ECO:0007744" key="65">
    <source>
        <dbReference type="PDB" id="6OE4"/>
    </source>
</evidence>
<evidence type="ECO:0007744" key="66">
    <source>
        <dbReference type="PDB" id="6OE5"/>
    </source>
</evidence>
<evidence type="ECO:0007744" key="67">
    <source>
        <dbReference type="PDB" id="6OUS"/>
    </source>
</evidence>
<evidence type="ECO:0007829" key="68">
    <source>
        <dbReference type="PDB" id="3KPE"/>
    </source>
</evidence>
<evidence type="ECO:0007829" key="69">
    <source>
        <dbReference type="PDB" id="3RKI"/>
    </source>
</evidence>
<evidence type="ECO:0007829" key="70">
    <source>
        <dbReference type="PDB" id="5K6F"/>
    </source>
</evidence>
<evidence type="ECO:0007829" key="71">
    <source>
        <dbReference type="PDB" id="5K6H"/>
    </source>
</evidence>
<evidence type="ECO:0007829" key="72">
    <source>
        <dbReference type="PDB" id="5UDC"/>
    </source>
</evidence>
<evidence type="ECO:0007829" key="73">
    <source>
        <dbReference type="PDB" id="6OJ7"/>
    </source>
</evidence>
<evidence type="ECO:0007829" key="74">
    <source>
        <dbReference type="PDB" id="6VKE"/>
    </source>
</evidence>
<evidence type="ECO:0007829" key="75">
    <source>
        <dbReference type="PDB" id="7LVW"/>
    </source>
</evidence>
<reference key="1">
    <citation type="journal article" date="1984" name="Proc. Natl. Acad. Sci. U.S.A.">
        <title>Nucleotide sequence of the gene encoding the fusion (F) glycoprotein of human respiratory syncytial virus.</title>
        <authorList>
            <person name="Collins P.L."/>
            <person name="Huang Y.T."/>
            <person name="Wertz G.W."/>
        </authorList>
    </citation>
    <scope>NUCLEOTIDE SEQUENCE [GENOMIC RNA]</scope>
</reference>
<reference key="2">
    <citation type="journal article" date="1996" name="Virology">
        <title>Nucleotide sequence analysis of the respiratory syncytial virus subgroup A cold-passaged (cp) temperature sensitive (ts) cpts-248/404 live attenuated virus vaccine candidate.</title>
        <authorList>
            <person name="Firestone C.Y."/>
            <person name="Whitehead S.S."/>
            <person name="Collins P.L."/>
            <person name="Murphy B.R."/>
            <person name="Crowe J.E. Jr."/>
        </authorList>
    </citation>
    <scope>NUCLEOTIDE SEQUENCE [GENOMIC RNA]</scope>
    <source>
        <strain>Cold-passage attenuated</strain>
    </source>
</reference>
<reference key="3">
    <citation type="journal article" date="1996" name="Virus Genes">
        <title>Acquisition of the ts phenotype by a chemically mutagenized cold-passaged human respiratory syncytial virus vaccine candidate results from the acquisition of a single mutation in the polymerase (L) gene.</title>
        <authorList>
            <person name="Crowe J.E. Jr."/>
            <person name="Firestone C.Y."/>
            <person name="Whitehead S.S."/>
            <person name="Collins P.L."/>
            <person name="Murphy B.R."/>
        </authorList>
    </citation>
    <scope>NUCLEOTIDE SEQUENCE [GENOMIC RNA]</scope>
    <source>
        <strain>Cold-passage attenuated</strain>
    </source>
</reference>
<reference key="4">
    <citation type="journal article" date="1995" name="Virology">
        <title>A cold-passaged, attenuated strain of human respiratory syncytial virus contains mutations in the F and L genes.</title>
        <authorList>
            <person name="Connors M."/>
            <person name="Crowe J.E. Jr."/>
            <person name="Firestone C.Y."/>
            <person name="Murphy B.R."/>
            <person name="Collins P.L."/>
        </authorList>
    </citation>
    <scope>NUCLEOTIDE SEQUENCE [GENOMIC RNA]</scope>
    <source>
        <strain>Cold-passage attenuated</strain>
    </source>
</reference>
<reference key="5">
    <citation type="journal article" date="1998" name="J. Virol.">
        <title>Recombinant respiratory syncytial virus (RSV) bearing a set of mutations from cold-passaged RSV is attenuated in chimpanzees.</title>
        <authorList>
            <person name="Whitehead S.S."/>
            <person name="Juhasz K."/>
            <person name="Firestone C.Y."/>
            <person name="Collins P.L."/>
            <person name="Murphy B.R."/>
        </authorList>
    </citation>
    <scope>NUCLEOTIDE SEQUENCE [GENOMIC RNA]</scope>
    <source>
        <strain>Cold-passage attenuated</strain>
    </source>
</reference>
<reference key="6">
    <citation type="journal article" date="2001" name="Proc. Natl. Acad. Sci. U.S.A.">
        <title>Cleavage of the human respiratory syncytial virus fusion protein at two distinct sites is required for activation of membrane fusion.</title>
        <authorList>
            <person name="Gonzalez-Reyes L."/>
            <person name="Ruiz-Argueello M.B."/>
            <person name="Garcia-Barreno B."/>
            <person name="Calder L."/>
            <person name="Lopez J.A."/>
            <person name="Albar J.P."/>
            <person name="Skehel J.J."/>
            <person name="Wiley D.C."/>
            <person name="Melero J.A."/>
        </authorList>
    </citation>
    <scope>PROTEIN SEQUENCE OF 110-117</scope>
    <scope>PROTEOLYTIC CLEAVAGE (FUSION GLYCOPROTEIN F0)</scope>
    <scope>MUTAGENESIS OF ARG-108; ARG-109 AND LYS-131</scope>
</reference>
<reference key="7">
    <citation type="journal article" date="1989" name="J. Biol. Chem.">
        <title>Fatty acid acylation of the fusion glycoprotein of human respiratory syncytial virus.</title>
        <authorList>
            <person name="Arumugham R.G."/>
            <person name="Seid R.C. Jr."/>
            <person name="Doyle S."/>
            <person name="Hildreth S.W."/>
            <person name="Paradisio P.R."/>
        </authorList>
    </citation>
    <scope>PALMITOYLATION AT CYS-550</scope>
</reference>
<reference key="8">
    <citation type="journal article" date="1999" name="J. Virol.">
        <title>RhoA interacts with the fusion glycoprotein of respiratory syncytial virus and facilitates virus-induced syncytium formation.</title>
        <authorList>
            <person name="Pastey M.K."/>
            <person name="Crowe J.E. Jr."/>
            <person name="Graham B.S."/>
        </authorList>
    </citation>
    <scope>INTERACTION WITH HOST RHOA (FUSION GLYCOPROTEIN F1)</scope>
    <scope>INTERACTION WITH HOST RHOA (FUSION GLYCOPROTEIN F2)</scope>
    <scope>FUNCTION (FUSION GLYCOPROTEIN F1)</scope>
    <scope>FUNCTION (FUSION GLYCOPROTEIN F2)</scope>
</reference>
<reference key="9">
    <citation type="journal article" date="2000" name="J. Virol.">
        <title>The fusion glycoprotein of human respiratory syncytial virus facilitates virus attachment and infectivity via an interaction with cellular heparan sulfate.</title>
        <authorList>
            <person name="Feldman S.A."/>
            <person name="Audet S."/>
            <person name="Beeler J.A."/>
        </authorList>
    </citation>
    <scope>INTERACTION WITH HOST HEPARAN SULFATE (FUSION GLYCOPROTEIN F1)</scope>
    <scope>INTERACTION WITH HOST HEPARAN SULFATE (FUSION GLYCOPROTEIN F2)</scope>
    <scope>FUNCTION (FUSION GLYCOPROTEIN F1)</scope>
    <scope>FUNCTION (FUSION GLYCOPROTEIN F2)</scope>
</reference>
<reference key="10">
    <citation type="journal article" date="2000" name="J. Virol.">
        <title>The core of the respiratory syncytial virus fusion protein is a trimeric coiled coil.</title>
        <authorList>
            <person name="Matthews J.M."/>
            <person name="Young T.F."/>
            <person name="Tucker S.P."/>
            <person name="Mackay J.P."/>
        </authorList>
    </citation>
    <scope>COILED COIL</scope>
    <scope>DOMAIN (FUSION GLYCOPROTEIN F1)</scope>
    <scope>DOMAIN (FUSION GLYCOPROTEIN F0)</scope>
</reference>
<reference key="11">
    <citation type="journal article" date="2001" name="J. Gen. Virol.">
        <title>Furin cleavage of the respiratory syncytial virus fusion protein is not a requirement for its transport to the surface of virus-infected cells.</title>
        <authorList>
            <person name="Sugrue R.J."/>
            <person name="Brown C."/>
            <person name="Brown G."/>
            <person name="Aitken J."/>
            <person name="McL Rixon H.W."/>
        </authorList>
    </citation>
    <scope>PROTEOLYTIC CLEAVAGE (FUSION GLYCOPROTEIN F0)</scope>
</reference>
<reference key="12">
    <citation type="journal article" date="2001" name="J. Biol. Chem.">
        <title>Proteolytic activation of respiratory syncytial virus fusion protein. Cleavage at two furin consensus sequences.</title>
        <authorList>
            <person name="Zimmer G."/>
            <person name="Budz L."/>
            <person name="Herrler G."/>
        </authorList>
    </citation>
    <scope>PROTEOLYTIC CLEAVAGE (FUSION GLYCOPROTEIN F0)</scope>
</reference>
<reference key="13">
    <citation type="journal article" date="2002" name="Virology">
        <title>Effect of proteolytic processing at two distinct sites on shape and aggregation of an anchorless fusion protein of human respiratory syncytial virus and fate of the intervening segment.</title>
        <authorList>
            <person name="Begona Ruiz-Argueello M."/>
            <person name="Gonzalez-Reyes L."/>
            <person name="Calder L.J."/>
            <person name="Palomo C."/>
            <person name="Martin D."/>
            <person name="Saiz M.J."/>
            <person name="Garcia-Barreno B."/>
            <person name="Skehel J.J."/>
            <person name="Melero J.A."/>
        </authorList>
    </citation>
    <scope>PROTEOLYTIC CLEAVAGE (FUSION GLYCOPROTEIN F0)</scope>
    <scope>MUTAGENESIS OF 108-ARG-ARG-109</scope>
</reference>
<reference key="14">
    <citation type="journal article" date="2003" name="J. Virol.">
        <title>Respiratory syncytial virus (RSV) fusion protein subunit F2, not attachment protein G, determines the specificity of RSV infection.</title>
        <authorList>
            <person name="Schlender J."/>
            <person name="Zimmer G."/>
            <person name="Herrler G."/>
            <person name="Conzelmann K.K."/>
        </authorList>
    </citation>
    <scope>FUNCTION (FUSION GLYCOPROTEIN F2)</scope>
</reference>
<reference key="15">
    <citation type="journal article" date="2005" name="J. Virol.">
        <title>The transmembrane domain of the respiratory syncytial virus F protein is an orientation-independent apical plasma membrane sorting sequence.</title>
        <authorList>
            <person name="Brock S.C."/>
            <person name="Heck J.M."/>
            <person name="McGraw P.A."/>
            <person name="Crowe J.E. Jr."/>
        </authorList>
    </citation>
    <scope>SUBCELLULAR LOCATION (FUSION GLYCOPROTEIN F0)</scope>
    <scope>SUBCELLULAR LOCATION (FUSION GLYCOPROTEIN F1)</scope>
    <scope>TOPOLOGY</scope>
</reference>
<reference key="16">
    <citation type="journal article" date="2006" name="Virol. J.">
        <title>Contribution of cysteine residues in the extracellular domain of the F protein of human respiratory syncytial virus to its function.</title>
        <authorList>
            <person name="Day N.D."/>
            <person name="Branigan P.J."/>
            <person name="Liu C."/>
            <person name="Gutshall L.L."/>
            <person name="Luo J."/>
            <person name="Melero J.A."/>
            <person name="Sarisky R.T."/>
            <person name="Del Vecchio A.M."/>
        </authorList>
    </citation>
    <scope>DISULFIDE BOND</scope>
    <scope>MUTAGENESIS OF CYS-37; CYS-69; CYS-212; CYS-313; CYS-322; CYS-333; CYS-343; CYS-358; CYS-367; CYS-382; CYS-393; CYS-416; CYS-422 AND CYS-439</scope>
    <scope>SUBUNIT (FUSION GLYCOPROTEIN F1)</scope>
    <scope>SUBUNIT (FUSION GLYCOPROTEIN F2)</scope>
</reference>
<reference key="17">
    <citation type="journal article" date="2008" name="J. Virol.">
        <title>The fusion protein of respiratory syncytial virus triggers p53-dependent apoptosis.</title>
        <authorList>
            <person name="Eckardt-Michel J."/>
            <person name="Lorek M."/>
            <person name="Baxmann D."/>
            <person name="Grunwald T."/>
            <person name="Keil G.M."/>
            <person name="Zimmer G."/>
        </authorList>
    </citation>
    <scope>FUNCTION (FUSION GLYCOPROTEIN F1)</scope>
    <scope>FUNCTION (FUSION GLYCOPROTEIN F2)</scope>
</reference>
<reference key="18">
    <citation type="journal article" date="2008" name="Biochem. Biophys. Res. Commun.">
        <title>The RSV F and G glycoproteins interact to form a complex on the surface of infected cells.</title>
        <authorList>
            <person name="Low K.W."/>
            <person name="Tan T."/>
            <person name="Ng K."/>
            <person name="Tan B.H."/>
            <person name="Sugrue R.J."/>
        </authorList>
    </citation>
    <scope>IDENTIFICATION IN A COMPLEX WITH F1; F2 AND G GLYCOPROTEIN (FUSION GLYCOPROTEIN F1)</scope>
    <scope>IDENTIFICATION IN A COMPLEX WITH F1; F2 AND G GLYCOPROTEIN (FUSION GLYCOPROTEIN F2)</scope>
</reference>
<reference key="19">
    <citation type="journal article" date="2011" name="Nat. Med.">
        <title>Identification of nucleolin as a cellular receptor for human respiratory syncytial virus.</title>
        <authorList>
            <person name="Tayyari F."/>
            <person name="Marchant D."/>
            <person name="Moraes T.J."/>
            <person name="Duan W."/>
            <person name="Mastrangelo P."/>
            <person name="Hegele R.G."/>
        </authorList>
    </citation>
    <scope>INTERACTION WITH HOST NCL (FUSION GLYCOPROTEIN F1)</scope>
    <scope>FUNCTION (FUSION GLYCOPROTEIN F1)</scope>
</reference>
<reference key="20">
    <citation type="journal article" date="2013" name="Curr. Top. Microbiol. Immunol.">
        <title>Structure and function of respiratory syncytial virus surface glycoproteins.</title>
        <authorList>
            <person name="McLellan J.S."/>
            <person name="Ray W.C."/>
            <person name="Peeples M.E."/>
        </authorList>
    </citation>
    <scope>REVIEW</scope>
</reference>
<reference key="21">
    <citation type="journal article" date="2013" name="Proc. Natl. Acad. Sci. U.S.A.">
        <title>Architecture of respiratory syncytial virus revealed by electron cryotomography.</title>
        <authorList>
            <person name="Liljeroos L."/>
            <person name="Krzyzaniak M.A."/>
            <person name="Helenius A."/>
            <person name="Butcher S.J."/>
        </authorList>
    </citation>
    <scope>CRYOELECTRON MICROSCOPY</scope>
    <scope>SUBCELLULAR LOCATION (FUSION GLYCOPROTEIN F1)</scope>
    <scope>SUBCELLULAR LOCATION (FUSION GLYCOPROTEIN F2)</scope>
</reference>
<reference key="22">
    <citation type="journal article" date="2013" name="PLoS Pathog.">
        <title>Host cell entry of respiratory syncytial virus involves macropinocytosis followed by proteolytic activation of the F protein.</title>
        <authorList>
            <person name="Krzyzaniak M.A."/>
            <person name="Zumstein M.T."/>
            <person name="Gerez J.A."/>
            <person name="Picotti P."/>
            <person name="Helenius A."/>
        </authorList>
    </citation>
    <scope>FUNCTION (FUSION GLYCOPROTEIN F0)</scope>
    <scope>PROTEOLYTIC CLEAVAGE (FUSION GLYCOPROTEIN F0)</scope>
    <scope>FUNCTION (FUSION GLYCOPROTEIN F1)</scope>
</reference>
<reference key="23">
    <citation type="journal article" date="2018" name="J. Virol.">
        <title>The Heptad Repeat C Domain of the Respiratory Syncytial Virus Fusion Protein Plays a Key Role in Membrane Fusion.</title>
        <authorList>
            <person name="Bermingham I.M."/>
            <person name="Chappell K.J."/>
            <person name="Watterson D."/>
            <person name="Young P.R."/>
        </authorList>
    </citation>
    <scope>DOMAIN (FUSION GLYCOPROTEIN F0)</scope>
    <scope>COILED COIL (FUSION GLYCOPROTEIN F2)</scope>
</reference>
<reference key="24">
    <citation type="journal article" date="2019" name="Nat. Rev. Microbiol.">
        <title>Respiratory syncytial virus entry and how to block it.</title>
        <authorList>
            <person name="Battles M.B."/>
            <person name="McLellan J.S."/>
        </authorList>
    </citation>
    <scope>REVIEW</scope>
</reference>
<reference key="25">
    <citation type="journal article" date="2020" name="Nature">
        <title>IGF1R is an entry receptor for respiratory syncytial virus.</title>
        <authorList>
            <person name="Griffiths C.D."/>
            <person name="Bilawchuk L.M."/>
            <person name="McDonough J.E."/>
            <person name="Jamieson K.C."/>
            <person name="Elawar F."/>
            <person name="Cen Y."/>
            <person name="Duan W."/>
            <person name="Lin C."/>
            <person name="Song H."/>
            <person name="Casanova J.L."/>
            <person name="Ogg S."/>
            <person name="Jensen L.D."/>
            <person name="Thienpont B."/>
            <person name="Kumar A."/>
            <person name="Hobman T.C."/>
            <person name="Proud D."/>
            <person name="Moraes T.J."/>
            <person name="Marchant D.J."/>
        </authorList>
    </citation>
    <scope>INTERACTION WITH HOST IGF1R (FUSION GLYCOPROTEIN F1)</scope>
    <scope>FUNCTION (FUSION GLYCOPROTEIN F1)</scope>
    <scope>INTERACTION WITH HOST IGF1R (FUSION GLYCOPROTEIN F2)</scope>
    <scope>FUNCTION (FUSION GLYCOPROTEIN F2)</scope>
</reference>
<reference key="26">
    <citation type="journal article" date="2010" name="Nat. Struct. Mol. Biol.">
        <title>Structural basis of respiratory syncytial virus neutralization by motavizumab.</title>
        <authorList>
            <person name="McLellan J.S."/>
            <person name="Chen M."/>
            <person name="Kim A."/>
            <person name="Yang Y."/>
            <person name="Graham B.S."/>
            <person name="Kwong P.D."/>
        </authorList>
    </citation>
    <scope>X-RAY CRYSTALLOGRAPHY (2.75 ANGSTROMS) OF 254-277</scope>
</reference>
<reference key="27">
    <citation type="journal article" date="2010" name="Proc. Natl. Acad. Sci. U.S.A.">
        <title>Binding of a potent small-molecule inhibitor of six-helix bundle formation requires interactions with both heptad-repeats of the RSV fusion protein.</title>
        <authorList>
            <person name="Roymans D."/>
            <person name="De Bondt H.L."/>
            <person name="Arnoult E."/>
            <person name="Geluykens P."/>
            <person name="Gevers T."/>
            <person name="Van Ginderen M."/>
            <person name="Verheyen N."/>
            <person name="Kim H."/>
            <person name="Willebrords R."/>
            <person name="Bonfanti J.F."/>
            <person name="Bruinzeel W."/>
            <person name="Cummings M.D."/>
            <person name="van Vlijmen H."/>
            <person name="Andries K."/>
        </authorList>
    </citation>
    <scope>X-RAY CRYSTALLOGRAPHY (1.47 ANGSTROMS) OF 159-209 AND 482-520</scope>
    <scope>COILED COIL (FUSION GLYCOPROTEIN F1)</scope>
    <scope>FUNCTION (FUSION GLYCOPROTEIN F1)</scope>
</reference>
<reference evidence="37 38" key="28">
    <citation type="journal article" date="2011" name="J. Virol.">
        <title>Structure of respiratory syncytial virus fusion glycoprotein in the postfusion conformation reveals preservation of neutralizing epitopes.</title>
        <authorList>
            <person name="McLellan J.S."/>
            <person name="Yang Y."/>
            <person name="Graham B.S."/>
            <person name="Kwong P.D."/>
        </authorList>
    </citation>
    <scope>X-RAY CRYSTALLOGRAPHY (2.82 ANGSTROMS) OF 26-109 OF 147-513</scope>
    <scope>GLYCOSYLATION AT ASN-500</scope>
    <scope>DISULFIDE BOND</scope>
    <scope>SUBUNIT (FUSION GLYCOPROTEIN F1)</scope>
    <scope>SUBUNIT (FUSION GLYCOPROTEIN F2)</scope>
</reference>
<reference key="29">
    <citation type="journal article" date="2011" name="Proc. Natl. Acad. Sci. U.S.A.">
        <title>Structural basis for immunization with postfusion respiratory syncytial virus fusion F glycoprotein (RSV F) to elicit high neutralizing antibody titers.</title>
        <authorList>
            <person name="Swanson K.A."/>
            <person name="Settembre E.C."/>
            <person name="Shaw C.A."/>
            <person name="Dey A.K."/>
            <person name="Rappuoli R."/>
            <person name="Mandl C.W."/>
            <person name="Dormitzer P.R."/>
            <person name="Carfi A."/>
        </authorList>
    </citation>
    <scope>X-RAY CRYSTALLOGRAPHY (3.20 ANGSTROMS) OF 1-524</scope>
    <scope>GLYCOSYLATION AT ASN-27; ASN-70 AND ASN-500</scope>
</reference>
<reference key="30">
    <citation type="journal article" date="2013" name="Science">
        <title>Structure of RSV fusion glycoprotein trimer bound to a prefusion-specific neutralizing antibody.</title>
        <authorList>
            <person name="McLellan J.S."/>
            <person name="Chen M."/>
            <person name="Leung S."/>
            <person name="Graepel K.W."/>
            <person name="Du X."/>
            <person name="Yang Y."/>
            <person name="Zhou T."/>
            <person name="Baxa U."/>
            <person name="Yasuda E."/>
            <person name="Beaumont T."/>
            <person name="Kumar A."/>
            <person name="Modjarrad K."/>
            <person name="Zheng Z."/>
            <person name="Zhao M."/>
            <person name="Xia N."/>
            <person name="Kwong P.D."/>
            <person name="Graham B.S."/>
        </authorList>
    </citation>
    <scope>X-RAY CRYSTALLOGRAPHY (3.60 ANGSTROMS) OF 26-513</scope>
    <scope>DOMAIN (FUSION GLYCOPROTEIN F0)</scope>
    <scope>DOMAIN (FUSION GLYCOPROTEIN F1)</scope>
    <scope>SUBUNIT (FUSION GLYCOPROTEIN F1)</scope>
    <scope>SUBUNIT (FUSION GLYCOPROTEIN F2)</scope>
    <scope>FUNCTION (FUSION GLYCOPROTEIN F1)</scope>
</reference>
<reference key="31">
    <citation type="journal article" date="2013" name="Science">
        <title>Structure-based design of a fusion glycoprotein vaccine for respiratory syncytial virus.</title>
        <authorList>
            <person name="McLellan J.S."/>
            <person name="Chen M."/>
            <person name="Joyce M.G."/>
            <person name="Sastry M."/>
            <person name="Stewart-Jones G.B."/>
            <person name="Yang Y."/>
            <person name="Zhang B."/>
            <person name="Chen L."/>
            <person name="Srivatsan S."/>
            <person name="Zheng A."/>
            <person name="Zhou T."/>
            <person name="Graepel K.W."/>
            <person name="Kumar A."/>
            <person name="Moin S."/>
            <person name="Boyington J.C."/>
            <person name="Chuang G.Y."/>
            <person name="Soto C."/>
            <person name="Baxa U."/>
            <person name="Bakker A.Q."/>
            <person name="Spits H."/>
            <person name="Beaumont T."/>
            <person name="Zheng Z."/>
            <person name="Xia N."/>
            <person name="Ko S.Y."/>
            <person name="Todd J.P."/>
            <person name="Rao S."/>
            <person name="Graham B.S."/>
            <person name="Kwong P.D."/>
        </authorList>
    </citation>
    <scope>X-RAY CRYSTALLOGRAPHY (2.40 ANGSTROMS) OF 26-107 AND 137-513</scope>
    <scope>GLYCOSYLATION AT ASN-500</scope>
</reference>
<reference evidence="39 40" key="32">
    <citation type="journal article" date="2015" name="Nat. Commun.">
        <title>A highly stable prefusion RSV F vaccine derived from structural analysis of the fusion mechanism.</title>
        <authorList>
            <person name="Krarup A."/>
            <person name="Truan D."/>
            <person name="Furmanova-Hollenstein P."/>
            <person name="Bogaert L."/>
            <person name="Bouchier P."/>
            <person name="Bisschop I.J.M."/>
            <person name="Widjojoatmodjo M.N."/>
            <person name="Zahn R."/>
            <person name="Schuitemaker H."/>
            <person name="McLellan J.S."/>
            <person name="Langedijk J.P.M."/>
        </authorList>
    </citation>
    <scope>X-RAY CRYSTALLOGRAPHY (2.30 ANGSTROMS) OF 26-513</scope>
    <scope>SUBUNIT (FUSION GLYCOPROTEIN F1)</scope>
    <scope>SUBUNIT (FUSION GLYCOPROTEIN F2)</scope>
</reference>
<reference evidence="41 42 43 44 45 46" key="33">
    <citation type="journal article" date="2016" name="Nat. Chem. Biol.">
        <title>Molecular mechanism of respiratory syncytial virus fusion inhibitors.</title>
        <authorList>
            <person name="Battles M.B."/>
            <person name="Langedijk J.P."/>
            <person name="Furmanova-Hollenstein P."/>
            <person name="Chaiwatpongsakorn S."/>
            <person name="Costello H.M."/>
            <person name="Kwanten L."/>
            <person name="Vranckx L."/>
            <person name="Vink P."/>
            <person name="Jaensch S."/>
            <person name="Jonckers T.H."/>
            <person name="Koul A."/>
            <person name="Arnoult E."/>
            <person name="Peeples M.E."/>
            <person name="Roymans D."/>
            <person name="McLellan J.S."/>
        </authorList>
    </citation>
    <scope>X-RAY CRYSTALLOGRAPHY (2.30 ANGSTROMS) OF 1-513</scope>
</reference>
<reference evidence="47 48 49 50 51 52" key="34">
    <citation type="journal article" date="2016" name="Nat. Struct. Mol. Biol.">
        <title>Iterative structure-based improvement of a fusion-glycoprotein vaccine against RSV.</title>
        <authorList>
            <person name="Joyce M.G."/>
            <person name="Zhang B."/>
            <person name="Ou L."/>
            <person name="Chen M."/>
            <person name="Chuang G.Y."/>
            <person name="Druz A."/>
            <person name="Kong W.P."/>
            <person name="Lai Y.T."/>
            <person name="Rundlet E.J."/>
            <person name="Tsybovsky Y."/>
            <person name="Yang Y."/>
            <person name="Georgiev I.S."/>
            <person name="Guttman M."/>
            <person name="Lees C.R."/>
            <person name="Pancera M."/>
            <person name="Sastry M."/>
            <person name="Soto C."/>
            <person name="Stewart-Jones G.B.E."/>
            <person name="Thomas P.V."/>
            <person name="Van Galen J.G."/>
            <person name="Baxa U."/>
            <person name="Lee K.K."/>
            <person name="Mascola J.R."/>
            <person name="Graham B.S."/>
            <person name="Kwong P.D."/>
        </authorList>
    </citation>
    <scope>X-RAY CRYSTALLOGRAPHY (2.59 ANGSTROMS) OF 26-103 AND 145-509</scope>
    <scope>GLYCOSYLATION AT ASN-27 AND ASN-70</scope>
</reference>
<reference evidence="56" key="35">
    <citation type="journal article" date="2017" name="Nat. Microbiol.">
        <title>Structural basis for antibody cross-neutralization of respiratory syncytial virus and human metapneumovirus.</title>
        <authorList>
            <person name="Wen X."/>
            <person name="Mousa J.J."/>
            <person name="Bates J.T."/>
            <person name="Lamb R.A."/>
            <person name="Crowe J.E. Jr."/>
            <person name="Jardetzky T.S."/>
        </authorList>
    </citation>
    <scope>X-RAY CRYSTALLOGRAPHY (3.08 ANGSTROMS) OF 1-513</scope>
</reference>
<reference evidence="54 55" key="36">
    <citation type="journal article" date="2017" name="Nat. Commun.">
        <title>Potent single-domain antibodies that arrest respiratory syncytial virus fusion protein in its prefusion state.</title>
        <authorList>
            <person name="Rossey I."/>
            <person name="Gilman M.S."/>
            <person name="Kabeche S.C."/>
            <person name="Sedeyn K."/>
            <person name="Wrapp D."/>
            <person name="Kanekiyo M."/>
            <person name="Chen M."/>
            <person name="Mas V."/>
            <person name="Spitaels J."/>
            <person name="Melero J.A."/>
            <person name="Graham B.S."/>
            <person name="Schepens B."/>
            <person name="McLellan J.S."/>
            <person name="Saelens X."/>
        </authorList>
    </citation>
    <scope>X-RAY CRYSTALLOGRAPHY (3.30 ANGSTROMS) OF 1-516</scope>
    <scope>GLYCOSYLATION AT ASN-500</scope>
</reference>
<reference evidence="53" key="37">
    <citation type="journal article" date="2017" name="Nat. Commun.">
        <title>Therapeutic efficacy of a respiratory syncytial virus fusion inhibitor.</title>
        <authorList>
            <person name="Roymans D."/>
            <person name="Alnajjar S.S."/>
            <person name="Battles M.B."/>
            <person name="Sitthicharoenchai P."/>
            <person name="Furmanova-Hollenstein P."/>
            <person name="Rigaux P."/>
            <person name="Berg J.V.D."/>
            <person name="Kwanten L."/>
            <person name="Ginderen M.V."/>
            <person name="Verheyen N."/>
            <person name="Vranckx L."/>
            <person name="Jaensch S."/>
            <person name="Arnoult E."/>
            <person name="Voorzaat R."/>
            <person name="Gallup J.M."/>
            <person name="Larios-Mora A."/>
            <person name="Crabbe M."/>
            <person name="Huntjens D."/>
            <person name="Raboisson P."/>
            <person name="Langedijk J.P."/>
            <person name="Ackermann M.R."/>
            <person name="McLellan J.S."/>
            <person name="Vendeville S."/>
            <person name="Koul A."/>
        </authorList>
    </citation>
    <scope>X-RAY CRYSTALLOGRAPHY (2.50 ANGSTROMS) OF 1-513 IN COMPLEX WITH THE FUSION INHIBITOR JNJ-53718678</scope>
</reference>
<reference evidence="58" key="38">
    <citation type="journal article" date="2017" name="Nat. Commun.">
        <title>Structural basis of respiratory syncytial virus subtype-dependent neutralization by an antibody targeting the fusion glycoprotein.</title>
        <authorList>
            <person name="Tian D."/>
            <person name="Battles M.B."/>
            <person name="Moin S.M."/>
            <person name="Chen M."/>
            <person name="Modjarrad K."/>
            <person name="Kumar A."/>
            <person name="Kanekiyo M."/>
            <person name="Graepel K.W."/>
            <person name="Taher N.M."/>
            <person name="Hotard A.L."/>
            <person name="Moore M.L."/>
            <person name="Zhao M."/>
            <person name="Zheng Z.Z."/>
            <person name="Xia N.S."/>
            <person name="McLellan J.S."/>
            <person name="Graham B.S."/>
        </authorList>
    </citation>
    <scope>X-RAY CRYSTALLOGRAPHY (3.40 ANGSTROMS) OF 1-513</scope>
</reference>
<reference evidence="57" key="39">
    <citation type="journal article" date="2017" name="Sci. Transl. Med.">
        <title>A highly potent extended half-life antibody as a potential RSV vaccine surrogate for all infants.</title>
        <authorList>
            <person name="Zhu Q."/>
            <person name="McLellan J.S."/>
            <person name="Kallewaard N.L."/>
            <person name="Ulbrandt N.D."/>
            <person name="Palaszynski S."/>
            <person name="Zhang J."/>
            <person name="Moldt B."/>
            <person name="Khan A."/>
            <person name="Svabek C."/>
            <person name="McAuliffe J.M."/>
            <person name="Wrapp D."/>
            <person name="Patel N.K."/>
            <person name="Cook K.E."/>
            <person name="Richter B.W.M."/>
            <person name="Ryan P.C."/>
            <person name="Yuan A.Q."/>
            <person name="Suzich J.A."/>
        </authorList>
    </citation>
    <scope>X-RAY CRYSTALLOGRAPHY (3.45 ANGSTROMS) OF 1-513 IN COMPLEX WITH MANNOSE</scope>
    <scope>GLYCOSYLATION AT ASN-70</scope>
</reference>
<reference evidence="59 60" key="40">
    <citation type="journal article" date="2018" name="Immunity">
        <title>Infants Infected with Respiratory Syncytial Virus Generate Potent Neutralizing Antibodies that Lack Somatic Hypermutation.</title>
        <authorList>
            <person name="Goodwin E."/>
            <person name="Gilman M.S.A."/>
            <person name="Wrapp D."/>
            <person name="Chen M."/>
            <person name="Ngwuta J.O."/>
            <person name="Moin S.M."/>
            <person name="Bai P."/>
            <person name="Sivasubramanian A."/>
            <person name="Connor R.I."/>
            <person name="Wright P.F."/>
            <person name="Graham B.S."/>
            <person name="McLellan J.S."/>
            <person name="Walker L.M."/>
        </authorList>
    </citation>
    <scope>X-RAY CRYSTALLOGRAPHY (3.00 ANGSTROMS) OF 1-513</scope>
</reference>
<reference evidence="64" key="41">
    <citation type="journal article" date="2019" name="J. Am. Chem. Soc.">
        <title>Dual Inhibition of Human Parainfluenza Type 3 and Respiratory Syncytial Virus Infectivity with a Single Agent.</title>
        <authorList>
            <person name="Outlaw V.K."/>
            <person name="Bottom-Tanzer S."/>
            <person name="Kreitler D.F."/>
            <person name="Gellman S.H."/>
            <person name="Porotto M."/>
            <person name="Moscona A."/>
        </authorList>
    </citation>
    <scope>X-RAY CRYSTALLOGRAPHY (2.20 ANGSTROMS) OF 159-209</scope>
    <scope>COILED COIL</scope>
</reference>
<reference evidence="65 66" key="42">
    <citation type="journal article" date="2019" name="Nat. Commun.">
        <title>Transient opening of trimeric prefusion RSV F proteins.</title>
        <authorList>
            <person name="Gilman M.S.A."/>
            <person name="Furmanova-Hollenstein P."/>
            <person name="Pascual G."/>
            <person name="van 't Wout A.B."/>
            <person name="Langedijk J.P.M."/>
            <person name="McLellan J.S."/>
        </authorList>
    </citation>
    <scope>X-RAY CRYSTALLOGRAPHY (3.30 ANGSTROMS) OF 1-513</scope>
</reference>
<reference evidence="67" key="43">
    <citation type="journal article" date="2019" name="Nat. Commun.">
        <title>A potent broadly neutralizing human RSV antibody targets conserved site IV of the fusion glycoprotein.</title>
        <authorList>
            <person name="Tang A."/>
            <person name="Chen Z."/>
            <person name="Cox K.S."/>
            <person name="Su H.P."/>
            <person name="Callahan C."/>
            <person name="Fridman A."/>
            <person name="Zhang L."/>
            <person name="Patel S.B."/>
            <person name="Cejas P.J."/>
            <person name="Swoyer R."/>
            <person name="Touch S."/>
            <person name="Citron M.P."/>
            <person name="Govindarajan D."/>
            <person name="Luo B."/>
            <person name="Eddins M."/>
            <person name="Reid J.C."/>
            <person name="Soisson S.M."/>
            <person name="Galli J."/>
            <person name="Wang D."/>
            <person name="Wen Z."/>
            <person name="Heidecker G.J."/>
            <person name="Casimiro D.R."/>
            <person name="DiStefano D.J."/>
            <person name="Vora K.A."/>
        </authorList>
    </citation>
    <scope>X-RAY CRYSTALLOGRAPHY (3.40 ANGSTROMS) OF 26-109 AND 137-513</scope>
</reference>
<reference evidence="61" key="44">
    <citation type="journal article" date="2019" name="PLoS ONE">
        <title>Structure basis of neutralization by a novel site II/IV antibody against respiratory syncytial virus fusion protein.</title>
        <authorList>
            <person name="Xie Q."/>
            <person name="Wang Z."/>
            <person name="Ni F."/>
            <person name="Chen X."/>
            <person name="Ma J."/>
            <person name="Patel N."/>
            <person name="Lu H."/>
            <person name="Liu Y."/>
            <person name="Tian J.H."/>
            <person name="Flyer D."/>
            <person name="Massare M.J."/>
            <person name="Ellingsworth L."/>
            <person name="Glenn G."/>
            <person name="Smith G."/>
            <person name="Wang Q."/>
        </authorList>
    </citation>
    <scope>STRUCTURE BY ELECTRON MICROSCOPY (3.90 ANGSTROMS) OF 26-526</scope>
</reference>
<reference evidence="62 63" key="45">
    <citation type="journal article" date="2019" name="PLoS Pathog.">
        <title>Alternative conformations of a major antigenic site on RSV F.</title>
        <authorList>
            <person name="Jones H.G."/>
            <person name="Battles M.B."/>
            <person name="Lin C.C."/>
            <person name="Bianchi S."/>
            <person name="Corti D."/>
            <person name="McLellan J.S."/>
        </authorList>
    </citation>
    <scope>X-RAY CRYSTALLOGRAPHY (3.50 ANGSTROMS) OF 1-513</scope>
</reference>
<comment type="function">
    <molecule>Fusion glycoprotein F0</molecule>
    <text evidence="19">Inactive precursor that is cleaved at two sites by a furin-like protease to give rise to the mature F1 and F2 fusion glycoproteins.</text>
</comment>
<comment type="function">
    <molecule>Fusion glycoprotein F1</molecule>
    <text evidence="3 5 14 15 18 19 20 28 35 36">Class I viral fusion protein (PubMed:23618766). Under the current model, the protein has at least 3 conformational states: pre-fusion native state, pre-hairpin intermediate state, and post-fusion hairpin state (PubMed:23618766). During viral and plasma cell membrane fusion, the coiled coil regions assume a trimer-of-hairpins structure, positioning the fusion peptide in close proximity to the C-terminal region of the ectodomain (PubMed:19966279, PubMed:23618766). The formation of this structure appears to drive apposition and subsequent fusion of viral and cellular membranes leading to delivery of the nucleocapsid into the cytoplasm (PubMed:23593008, PubMed:23618766). This fusion is pH independent and occurs at the plasma or endosomal membrane (Probable). The trimer of F1-F2 (F protein) also facilitates the attachment to host cell by binding to host heparan sulfate (PubMed:10864656). F protein is involved in the entry into the host cell through the interaction with host IGF1R (PubMed:32494007). This interaction activates PRKCZ/PKCzeta that recruits host NCL/nucleolin to the apical cell surface where it can bind fusion glycoprotein F1 (PubMed:21841784, PubMed:32494007). Later in infection, F protein expressed at the plasma membrane of infected cells can mediate fusion with adjacent cells to form syncytia, a cytopathic effect that could lead to tissue necrosis (PubMed:10438814). F protein may trigger p53-dependent apoptosis (PubMed:18216092).</text>
</comment>
<comment type="function">
    <molecule>Fusion glycoprotein F2</molecule>
    <text evidence="3 5 10 14 28">Major determinant of the species specificity of RSV infection (PubMed:12663767). The trimer of F1-F2 (F protein) also facilitates the attachment to host cell by binding to host heparan sulfate (PubMed:10864656). F protein is involved in the entry into the host cell through the interaction with host IGF1R (PubMed:32494007). This interaction activates PRKCZ/PKCzeta that recruits host NCL/nucleolin to the apical cell surface where it can bind fusion glycoprotein F1 (PubMed:32494007). Later in infection, F protein expressed at the plasma membrane of infected cells can mediate fusion with adjacent cells to form syncytia, a cytopathic effect that could lead to tissue necrosis (PubMed:10438814). F protein seems to trigger p53-dependent apoptosis (PubMed:18216092).</text>
</comment>
<comment type="subunit">
    <molecule>Fusion glycoprotein F1</molecule>
    <text evidence="3 5 12 13 17 18 20 23 28">Homotrimer (PubMed:23618766, PubMed:26333350). Heterodimer with fusion protein F2; disulfide-linked (PubMed:16723026, PubMed:21613394). Interacts with host NCL; this interaction plays a role in viral entry into the host cell (PubMed:21841784). As a heterodimer with F2, interacts with host heparan sulfate (PubMed:10864656). As a heterodimer with F2, interacts with host IGF1R; this interaction activates PRKCZ/PKCzeta that recruits NCL/nucleolin from the host nucleus to the plasma membrane (PubMed:32494007). Part of a complex composed of F1, F2 and G glycoproteins (PubMed:18036342). As a heterodimer with F2, interacts with host RHOA; this interaction facilitates virus-induced syncytium formation (PubMed:10438814).</text>
</comment>
<comment type="subunit">
    <molecule>Fusion glycoprotein F2</molecule>
    <text evidence="3 5 12 13 17 20 23 28">Homotrimer (PubMed:23618766, PubMed:26333350). Heterodimer with fusion protein F1; disulfide-linked (PubMed:16723026, PubMed:21613394, PubMed:26333350). As a heterodimer with F1, interacts with host heparan sulfate (PubMed:10864656). As a heterodimer with F1, interacts with host IGF1R; this interaction activates PRKCZ/PKCzeta that recruits NCL/nucleolin from the host nucleus to the plasma membrane (PubMed:32494007). Part of a complex composed of F1, F2 and G glycoproteins (PubMed:18036342). As a heterodimer with F1, interacts with host RHOA; this interaction facilitates virus-induced syncytium formation (PubMed:10438814).</text>
</comment>
<comment type="interaction">
    <interactant intactId="EBI-10042897">
        <id>P03420</id>
    </interactant>
    <interactant intactId="EBI-10042897">
        <id>P03420</id>
        <label>F</label>
    </interactant>
    <organismsDiffer>false</organismsDiffer>
    <experiments>8</experiments>
</comment>
<comment type="subcellular location">
    <molecule>Fusion glycoprotein F0</molecule>
    <subcellularLocation>
        <location evidence="32">Host Golgi apparatus membrane</location>
        <topology evidence="11">Single-pass membrane protein</topology>
    </subcellularLocation>
</comment>
<comment type="subcellular location">
    <molecule>Fusion glycoprotein F1</molecule>
    <subcellularLocation>
        <location evidence="21">Virion membrane</location>
        <topology evidence="11">Single-pass type I membrane protein</topology>
    </subcellularLocation>
    <subcellularLocation>
        <location evidence="11">Host cell membrane</location>
        <topology evidence="11">Single-pass membrane protein</topology>
    </subcellularLocation>
    <text evidence="11">Localized at the host apical membrane.</text>
</comment>
<comment type="subcellular location">
    <molecule>Fusion glycoprotein F2</molecule>
    <subcellularLocation>
        <location evidence="21">Virion membrane</location>
    </subcellularLocation>
    <subcellularLocation>
        <location evidence="30">Host cell membrane</location>
    </subcellularLocation>
    <text evidence="30">Localized at the host apical membrane.</text>
</comment>
<comment type="domain">
    <molecule>Fusion glycoprotein F0</molecule>
    <text evidence="1 4 20 26">The N-terminus is a hydrophobic fusion peptide that inserts into the target host membrane (By similarity). It is buried in the center of the trimer cavity before cleavage by host furin (PubMed:23618766). The coiled coil (heptad repeat) regions are probably involved in homotrimerization, heterodimerization and in the formation of a fusion-active hairpin structure (PubMed:10846072, PubMed:29212939).</text>
</comment>
<comment type="domain">
    <molecule>Fusion glycoprotein F1</molecule>
    <text evidence="1 4 20">The N-terminus is a hydrophobic fusion peptide that inserts into the target host membrane (By similarity). It is buried in the center of the trimer cavity before cleavage by host furin (PubMed:23618766). The coiled coil (heptad repeat) regions are probably involved in homotrimerization, heterodimerization and in the formation of a fusion-active hairpin structure (PubMed:10846072).</text>
</comment>
<comment type="PTM">
    <molecule>Fusion glycoprotein F0</molecule>
    <text evidence="6 7 8 9 19 35">The F glycoprotein is synthesized as a F0 inactive precursor that is heavily N-glycosylated and processed at two sites by a host furin-like protease probably in the Golgi (PubMed:11369882, PubMed:11418598, PubMed:11493675, PubMed:23593008). The cleavage site between p27 and F1 may occur after endocytosis to yield the mature F1 and F2 proteins (Probable). Both cleavages are required for membrane fusion and p27 is released from the processed protein (PubMed:11493675, PubMed:12127793, PubMed:23593008).</text>
</comment>
<comment type="similarity">
    <text evidence="30">Belongs to the paramyxoviruses fusion glycoprotein family.</text>
</comment>
<sequence length="574" mass="63453">MELLILKANAITTILTAVTFCFASGQNITEEFYQSTCSAVSKGYLSALRTGWYTSVITIELSNIKENKCNGTDAKVKLIKQELDKYKNAVTELQLLMQSTPPTNNRARRELPRFMNYTLNNAKKTNVTLSKKRKRRFLGFLLGVGSAIASGVAVSKVLHLEGEVNKIKSALLSTNKAVVSLSNGVSVLTSKVLDLKNYIDKQLLPIVNKQSCSISNIETVIEFQQKNNRLLEITREFSVNAGVTTPVSTYMLTNSELLSLINDMPITNDQKKLMSNNVQIVRQQSYSIMSIIKEEVLAYVVQLPLYGVIDTPCWKLHTSPLCTTNTKEGSNICLTRTDRGWYCDNAGSVSFFPQAETCKVQSNRVFCDTMNSLTLPSEINLCNVDIFNPKYDCKIMTSKTDVSSSVITSLGAIVSCYGKTKCTASNKNRGIIKTFSNGCDYVSNKGMDTVSVGNTLYYVNKQEGKSLYVKGEPIINFYDPLVFPSDEFDASISQVNEKINQSLAFIRKSDELLHNVNAGKSTTNIMITTIIIVIIVILLSLIAVGLLLYCKARSTPVTLSKDQLSGINNIAFSN</sequence>
<gene>
    <name type="primary">F</name>
</gene>
<proteinExistence type="evidence at protein level"/>
<feature type="signal peptide" evidence="2">
    <location>
        <begin position="1"/>
        <end position="25"/>
    </location>
</feature>
<feature type="chain" id="PRO_0000039234" description="Fusion glycoprotein F0">
    <location>
        <begin position="26"/>
        <end position="574"/>
    </location>
</feature>
<feature type="chain" id="PRO_0000039235" description="Fusion glycoprotein F2" evidence="17">
    <location>
        <begin position="26"/>
        <end position="109"/>
    </location>
</feature>
<feature type="peptide" id="PRO_0000432664" description="p27" evidence="8">
    <location>
        <begin position="110"/>
        <end position="136"/>
    </location>
</feature>
<feature type="chain" id="PRO_0000039236" description="Fusion glycoprotein F1">
    <location>
        <begin position="137"/>
        <end position="574"/>
    </location>
</feature>
<feature type="topological domain" description="Extracellular" evidence="11">
    <location>
        <begin position="26"/>
        <end position="524"/>
    </location>
</feature>
<feature type="transmembrane region" description="Helical" evidence="11">
    <location>
        <begin position="525"/>
        <end position="550"/>
    </location>
</feature>
<feature type="topological domain" description="Cytoplasmic" evidence="11">
    <location>
        <begin position="551"/>
        <end position="574"/>
    </location>
</feature>
<feature type="region of interest" description="Fusion peptide" evidence="1">
    <location>
        <begin position="137"/>
        <end position="157"/>
    </location>
</feature>
<feature type="coiled-coil region" evidence="4 26">
    <location>
        <begin position="76"/>
        <end position="96"/>
    </location>
</feature>
<feature type="coiled-coil region" evidence="15 27 31">
    <location>
        <begin position="158"/>
        <end position="209"/>
    </location>
</feature>
<feature type="coiled-coil region" evidence="15 31">
    <location>
        <begin position="481"/>
        <end position="516"/>
    </location>
</feature>
<feature type="site" description="Cleavage; by host furin-like protease" evidence="8 9">
    <location>
        <begin position="109"/>
        <end position="110"/>
    </location>
</feature>
<feature type="site" description="Cleavage; by host furin-like protease" evidence="6 9">
    <location>
        <begin position="136"/>
        <end position="137"/>
    </location>
</feature>
<feature type="lipid moiety-binding region" description="S-palmitoyl cysteine; by host" evidence="24">
    <location>
        <position position="550"/>
    </location>
</feature>
<feature type="glycosylation site" description="N-linked (GlcNAc...) asparagine; by host" evidence="16">
    <location>
        <position position="27"/>
    </location>
</feature>
<feature type="glycosylation site" description="N-linked (GlcNAc...) asparagine; by host" evidence="16 25">
    <location>
        <position position="70"/>
    </location>
</feature>
<feature type="glycosylation site" description="N-linked (GlcNAc...) asparagine; by host" evidence="2">
    <location>
        <position position="116"/>
    </location>
</feature>
<feature type="glycosylation site" description="N-linked (GlcNAc...) asparagine; by host" evidence="2">
    <location>
        <position position="120"/>
    </location>
</feature>
<feature type="glycosylation site" description="N-linked (GlcNAc...) asparagine; by host" evidence="2">
    <location>
        <position position="126"/>
    </location>
</feature>
<feature type="glycosylation site" description="N-linked (GlcNAc...) asparagine; by host" evidence="16 22">
    <location>
        <position position="500"/>
    </location>
</feature>
<feature type="disulfide bond" description="Interchain (between F2 and F1 chains)" evidence="17 33">
    <location>
        <begin position="37"/>
        <end position="439"/>
    </location>
</feature>
<feature type="disulfide bond" description="Interchain (between F2 and F1 chains)" evidence="33">
    <location>
        <begin position="69"/>
        <end position="212"/>
    </location>
</feature>
<feature type="disulfide bond" evidence="17">
    <location>
        <begin position="313"/>
        <end position="343"/>
    </location>
</feature>
<feature type="disulfide bond" evidence="17">
    <location>
        <begin position="322"/>
        <end position="333"/>
    </location>
</feature>
<feature type="disulfide bond" evidence="17">
    <location>
        <begin position="358"/>
        <end position="367"/>
    </location>
</feature>
<feature type="disulfide bond" evidence="17">
    <location>
        <begin position="382"/>
        <end position="393"/>
    </location>
</feature>
<feature type="disulfide bond" evidence="33 34">
    <location>
        <begin position="416"/>
        <end position="422"/>
    </location>
</feature>
<feature type="sequence variant" description="In strain: Cold-passage attenuated.">
    <original>P</original>
    <variation>A</variation>
    <location>
        <position position="102"/>
    </location>
</feature>
<feature type="sequence variant" description="In strain: Cold-passage attenuated.">
    <original>E</original>
    <variation>A</variation>
    <location>
        <position position="218"/>
    </location>
</feature>
<feature type="sequence variant" description="In strain: Cold-passage attenuated.">
    <original>I</original>
    <variation>V</variation>
    <location>
        <position position="379"/>
    </location>
</feature>
<feature type="sequence variant" description="In strain: Cold-passage attenuated.">
    <original>M</original>
    <variation>V</variation>
    <location>
        <position position="447"/>
    </location>
</feature>
<feature type="sequence variant" description="In strain: Cold-passage attenuated.">
    <original>T</original>
    <variation>I</variation>
    <location>
        <position position="523"/>
    </location>
</feature>
<feature type="mutagenesis site" description="Impairs translation or folding of the F protein." evidence="12">
    <original>C</original>
    <variation>S</variation>
    <location>
        <position position="37"/>
    </location>
</feature>
<feature type="mutagenesis site" description="Impairs translation or folding of the F protein." evidence="12">
    <original>C</original>
    <variation>S</variation>
    <location>
        <position position="69"/>
    </location>
</feature>
<feature type="mutagenesis site" description="Complete loss of cleavage between F2 and p27." evidence="8 9">
    <original>RR</original>
    <variation>NN</variation>
    <location>
        <begin position="108"/>
        <end position="109"/>
    </location>
</feature>
<feature type="mutagenesis site" description="Complete loss of cleavage between F2 and p27." evidence="8">
    <original>R</original>
    <variation>N</variation>
    <location>
        <position position="108"/>
    </location>
</feature>
<feature type="mutagenesis site" description="Complete loss of cleavage between F2 and p27." evidence="8">
    <original>R</original>
    <variation>N</variation>
    <location>
        <position position="109"/>
    </location>
</feature>
<feature type="mutagenesis site" description="No effect on cleavage between F2 and p27." evidence="8">
    <original>K</original>
    <variation>Q</variation>
    <location>
        <position position="131"/>
    </location>
</feature>
<feature type="mutagenesis site" description="No effect on F1 and F2 structure and glycosylation." evidence="12">
    <original>C</original>
    <variation>S</variation>
    <location>
        <position position="212"/>
    </location>
</feature>
<feature type="mutagenesis site" description="Impairs translation or folding of the F protein." evidence="12">
    <original>C</original>
    <variation>S</variation>
    <location>
        <position position="313"/>
    </location>
</feature>
<feature type="mutagenesis site" description="Impairs translation or folding of the F protein." evidence="12">
    <original>C</original>
    <variation>S</variation>
    <location>
        <position position="322"/>
    </location>
</feature>
<feature type="mutagenesis site" description="Impairs translation or folding of the F protein." evidence="12">
    <original>C</original>
    <variation>S</variation>
    <location>
        <position position="333"/>
    </location>
</feature>
<feature type="mutagenesis site" description="Impairs translation or folding of the F protein." evidence="12">
    <original>C</original>
    <variation>S</variation>
    <location>
        <position position="343"/>
    </location>
</feature>
<feature type="mutagenesis site" description="Impairs translation or folding of the F protein." evidence="12">
    <original>C</original>
    <variation>S</variation>
    <location>
        <position position="358"/>
    </location>
</feature>
<feature type="mutagenesis site" description="Impairs translation or folding of the F protein." evidence="12">
    <original>C</original>
    <variation>S</variation>
    <location>
        <position position="367"/>
    </location>
</feature>
<feature type="mutagenesis site" description="No effect on F1 and F2 structure and glycosylation." evidence="12">
    <original>C</original>
    <variation>S</variation>
    <location>
        <position position="382"/>
    </location>
</feature>
<feature type="mutagenesis site" description="Impairs translation or folding of the F protein." evidence="12">
    <original>C</original>
    <variation>S</variation>
    <location>
        <position position="393"/>
    </location>
</feature>
<feature type="mutagenesis site" description="Impairs translation or folding of the F protein." evidence="12">
    <original>C</original>
    <variation>S</variation>
    <location>
        <position position="416"/>
    </location>
</feature>
<feature type="mutagenesis site" description="No effect on F1 and F2 structure and glycosylation." evidence="12">
    <original>C</original>
    <variation>S</variation>
    <location>
        <position position="422"/>
    </location>
</feature>
<feature type="mutagenesis site" description="Impairs translation or folding of the F protein." evidence="12">
    <original>C</original>
    <variation>S</variation>
    <location>
        <position position="439"/>
    </location>
</feature>
<feature type="strand" evidence="74">
    <location>
        <begin position="29"/>
        <end position="33"/>
    </location>
</feature>
<feature type="turn" evidence="74">
    <location>
        <begin position="34"/>
        <end position="37"/>
    </location>
</feature>
<feature type="strand" evidence="74">
    <location>
        <begin position="38"/>
        <end position="49"/>
    </location>
</feature>
<feature type="strand" evidence="74">
    <location>
        <begin position="51"/>
        <end position="60"/>
    </location>
</feature>
<feature type="strand" evidence="72">
    <location>
        <begin position="64"/>
        <end position="67"/>
    </location>
</feature>
<feature type="helix" evidence="74">
    <location>
        <begin position="74"/>
        <end position="96"/>
    </location>
</feature>
<feature type="turn" evidence="70">
    <location>
        <begin position="100"/>
        <end position="102"/>
    </location>
</feature>
<feature type="helix" evidence="74">
    <location>
        <begin position="138"/>
        <end position="141"/>
    </location>
</feature>
<feature type="helix" evidence="71">
    <location>
        <begin position="145"/>
        <end position="147"/>
    </location>
</feature>
<feature type="helix" evidence="74">
    <location>
        <begin position="149"/>
        <end position="158"/>
    </location>
</feature>
<feature type="helix" evidence="73">
    <location>
        <begin position="160"/>
        <end position="203"/>
    </location>
</feature>
<feature type="helix" evidence="68">
    <location>
        <begin position="204"/>
        <end position="206"/>
    </location>
</feature>
<feature type="turn" evidence="75">
    <location>
        <begin position="209"/>
        <end position="212"/>
    </location>
</feature>
<feature type="helix" evidence="74">
    <location>
        <begin position="217"/>
        <end position="238"/>
    </location>
</feature>
<feature type="turn" evidence="74">
    <location>
        <begin position="239"/>
        <end position="242"/>
    </location>
</feature>
<feature type="strand" evidence="74">
    <location>
        <begin position="243"/>
        <end position="246"/>
    </location>
</feature>
<feature type="turn" evidence="74">
    <location>
        <begin position="249"/>
        <end position="251"/>
    </location>
</feature>
<feature type="helix" evidence="74">
    <location>
        <begin position="254"/>
        <end position="262"/>
    </location>
</feature>
<feature type="strand" evidence="74">
    <location>
        <begin position="264"/>
        <end position="266"/>
    </location>
</feature>
<feature type="helix" evidence="74">
    <location>
        <begin position="268"/>
        <end position="275"/>
    </location>
</feature>
<feature type="helix" evidence="74">
    <location>
        <begin position="278"/>
        <end position="283"/>
    </location>
</feature>
<feature type="strand" evidence="74">
    <location>
        <begin position="286"/>
        <end position="293"/>
    </location>
</feature>
<feature type="strand" evidence="74">
    <location>
        <begin position="296"/>
        <end position="305"/>
    </location>
</feature>
<feature type="strand" evidence="74">
    <location>
        <begin position="308"/>
        <end position="318"/>
    </location>
</feature>
<feature type="helix" evidence="70">
    <location>
        <begin position="328"/>
        <end position="330"/>
    </location>
</feature>
<feature type="strand" evidence="74">
    <location>
        <begin position="333"/>
        <end position="336"/>
    </location>
</feature>
<feature type="strand" evidence="74">
    <location>
        <begin position="340"/>
        <end position="345"/>
    </location>
</feature>
<feature type="strand" evidence="74">
    <location>
        <begin position="348"/>
        <end position="352"/>
    </location>
</feature>
<feature type="strand" evidence="74">
    <location>
        <begin position="357"/>
        <end position="361"/>
    </location>
</feature>
<feature type="strand" evidence="74">
    <location>
        <begin position="364"/>
        <end position="368"/>
    </location>
</feature>
<feature type="helix" evidence="74">
    <location>
        <begin position="369"/>
        <end position="371"/>
    </location>
</feature>
<feature type="strand" evidence="74">
    <location>
        <begin position="373"/>
        <end position="375"/>
    </location>
</feature>
<feature type="helix" evidence="74">
    <location>
        <begin position="377"/>
        <end position="380"/>
    </location>
</feature>
<feature type="helix" evidence="74">
    <location>
        <begin position="381"/>
        <end position="384"/>
    </location>
</feature>
<feature type="strand" evidence="69">
    <location>
        <begin position="386"/>
        <end position="388"/>
    </location>
</feature>
<feature type="strand" evidence="74">
    <location>
        <begin position="389"/>
        <end position="391"/>
    </location>
</feature>
<feature type="strand" evidence="74">
    <location>
        <begin position="394"/>
        <end position="399"/>
    </location>
</feature>
<feature type="strand" evidence="74">
    <location>
        <begin position="404"/>
        <end position="407"/>
    </location>
</feature>
<feature type="strand" evidence="74">
    <location>
        <begin position="409"/>
        <end position="416"/>
    </location>
</feature>
<feature type="strand" evidence="74">
    <location>
        <begin position="422"/>
        <end position="426"/>
    </location>
</feature>
<feature type="turn" evidence="74">
    <location>
        <begin position="427"/>
        <end position="429"/>
    </location>
</feature>
<feature type="strand" evidence="74">
    <location>
        <begin position="430"/>
        <end position="434"/>
    </location>
</feature>
<feature type="strand" evidence="74">
    <location>
        <begin position="437"/>
        <end position="446"/>
    </location>
</feature>
<feature type="strand" evidence="74">
    <location>
        <begin position="449"/>
        <end position="452"/>
    </location>
</feature>
<feature type="strand" evidence="74">
    <location>
        <begin position="455"/>
        <end position="458"/>
    </location>
</feature>
<feature type="strand" evidence="74">
    <location>
        <begin position="465"/>
        <end position="469"/>
    </location>
</feature>
<feature type="helix" evidence="74">
    <location>
        <begin position="474"/>
        <end position="477"/>
    </location>
</feature>
<feature type="turn" evidence="74">
    <location>
        <begin position="480"/>
        <end position="482"/>
    </location>
</feature>
<feature type="helix" evidence="68">
    <location>
        <begin position="487"/>
        <end position="514"/>
    </location>
</feature>
<accession>P03420</accession>
<accession>P88811</accession>